<accession>O84375</accession>
<evidence type="ECO:0000250" key="1">
    <source>
        <dbReference type="UniProtKB" id="O67049"/>
    </source>
</evidence>
<evidence type="ECO:0000250" key="2">
    <source>
        <dbReference type="UniProtKB" id="P58687"/>
    </source>
</evidence>
<evidence type="ECO:0000305" key="3"/>
<proteinExistence type="inferred from homology"/>
<gene>
    <name evidence="1" type="primary">aroE</name>
    <name evidence="2" type="synonym">aroD</name>
    <name type="ordered locus">CT_370</name>
</gene>
<reference key="1">
    <citation type="journal article" date="1998" name="Science">
        <title>Genome sequence of an obligate intracellular pathogen of humans: Chlamydia trachomatis.</title>
        <authorList>
            <person name="Stephens R.S."/>
            <person name="Kalman S."/>
            <person name="Lammel C.J."/>
            <person name="Fan J."/>
            <person name="Marathe R."/>
            <person name="Aravind L."/>
            <person name="Mitchell W.P."/>
            <person name="Olinger L."/>
            <person name="Tatusov R.L."/>
            <person name="Zhao Q."/>
            <person name="Koonin E.V."/>
            <person name="Davis R.W."/>
        </authorList>
    </citation>
    <scope>NUCLEOTIDE SEQUENCE [LARGE SCALE GENOMIC DNA]</scope>
    <source>
        <strain>ATCC VR-885 / DSM 19411 / UW-3/Cx</strain>
    </source>
</reference>
<sequence length="478" mass="53098">MLCTTISGPSFLEAKKQILRSLKECHCFEMRVDLLSVSCLELKKLMELAPISILAWKKPESCSQADWIDKMQSLAELNPNYLDLEKDFPEEDMIRIRQLHPQIKIIRSLHTSEHTDIIQLYAHMRSSAADYYKFAVSSSSTTDLLDICHQKRSLPENTTVVCLGGMGRPSRILSPILQNPFTYARSTGSSPVAPGQFSLKHHYFYNFASLSAQSPICALIGDTSRSIGHLTHNPFFSQLGVACPYIKLPLTPQELPKFFSTIRTQPFLGVSVTSPLKTAVLPFLDKQAPSVKASGSCNTLVIRQGEIEGHDTDGEGLFSVLMQHQIPLNNQRVAIIGAGGAAQSIATRLSRANCELLIFNRTKAHAEDLASRCQAKAFSLEELPLHRVSLIINCLPPSCTIPKAVAPCVVDINTIPKHSTFTQYARSQGSSIIYGHEMFTQQALLQFRLWFPTLSFKHLEKTFIRRAAVLASLFSIAP</sequence>
<keyword id="KW-0028">Amino-acid biosynthesis</keyword>
<keyword id="KW-0057">Aromatic amino acid biosynthesis</keyword>
<keyword id="KW-0456">Lyase</keyword>
<keyword id="KW-0511">Multifunctional enzyme</keyword>
<keyword id="KW-0521">NADP</keyword>
<keyword id="KW-0560">Oxidoreductase</keyword>
<keyword id="KW-1185">Reference proteome</keyword>
<keyword id="KW-0704">Schiff base</keyword>
<organism>
    <name type="scientific">Chlamydia trachomatis serovar D (strain ATCC VR-885 / DSM 19411 / UW-3/Cx)</name>
    <dbReference type="NCBI Taxonomy" id="272561"/>
    <lineage>
        <taxon>Bacteria</taxon>
        <taxon>Pseudomonadati</taxon>
        <taxon>Chlamydiota</taxon>
        <taxon>Chlamydiia</taxon>
        <taxon>Chlamydiales</taxon>
        <taxon>Chlamydiaceae</taxon>
        <taxon>Chlamydia/Chlamydophila group</taxon>
        <taxon>Chlamydia</taxon>
    </lineage>
</organism>
<comment type="function">
    <text evidence="1 2">Bifunctional enzyme that catalyzes two sequential steps of the aromatic amino acids biosynthetic pathway. In the first reaction, the AroD domain catalyzes the cis-dehydration of 3-dehydroquinate (DHQ) and introduces the first double bond of the aromatic ring to yield 3-dehydroshikimate; in the second reaction, the AroE domain catalyzes the reversible NADPH linked reduction of 3-dehydroshikimate (DHSA) to yield shikimate (SA).</text>
</comment>
<comment type="catalytic activity">
    <reaction evidence="2">
        <text>3-dehydroquinate = 3-dehydroshikimate + H2O</text>
        <dbReference type="Rhea" id="RHEA:21096"/>
        <dbReference type="ChEBI" id="CHEBI:15377"/>
        <dbReference type="ChEBI" id="CHEBI:16630"/>
        <dbReference type="ChEBI" id="CHEBI:32364"/>
        <dbReference type="EC" id="4.2.1.10"/>
    </reaction>
</comment>
<comment type="catalytic activity">
    <reaction evidence="1">
        <text>shikimate + NADP(+) = 3-dehydroshikimate + NADPH + H(+)</text>
        <dbReference type="Rhea" id="RHEA:17737"/>
        <dbReference type="ChEBI" id="CHEBI:15378"/>
        <dbReference type="ChEBI" id="CHEBI:16630"/>
        <dbReference type="ChEBI" id="CHEBI:36208"/>
        <dbReference type="ChEBI" id="CHEBI:57783"/>
        <dbReference type="ChEBI" id="CHEBI:58349"/>
        <dbReference type="EC" id="1.1.1.25"/>
    </reaction>
</comment>
<comment type="pathway">
    <text evidence="2">Metabolic intermediate biosynthesis; chorismate biosynthesis; chorismate from D-erythrose 4-phosphate and phosphoenolpyruvate: step 3/7.</text>
</comment>
<comment type="pathway">
    <text evidence="1">Metabolic intermediate biosynthesis; chorismate biosynthesis; chorismate from D-erythrose 4-phosphate and phosphoenolpyruvate: step 4/7.</text>
</comment>
<comment type="similarity">
    <text evidence="2">In the N-terminal section; belongs to the type-I 3-dehydroquinase family.</text>
</comment>
<comment type="similarity">
    <text evidence="1">In the C-terminal section; belongs to the shikimate dehydrogenase family.</text>
</comment>
<feature type="chain" id="PRO_0000138824" description="Shikimate biosynthesis protein AroDE">
    <location>
        <begin position="1"/>
        <end position="478"/>
    </location>
</feature>
<feature type="region of interest" description="3-dehydroquinate dehydratase" evidence="3">
    <location>
        <begin position="1"/>
        <end position="208"/>
    </location>
</feature>
<feature type="region of interest" description="Shikimate 5-dehydrogenase" evidence="3">
    <location>
        <begin position="209"/>
        <end position="478"/>
    </location>
</feature>
<feature type="active site" description="Proton donor/acceptor; for 3-dehydroquinate dehydratase activity" evidence="2">
    <location>
        <position position="110"/>
    </location>
</feature>
<feature type="active site" description="Schiff-base intermediate with substrate; for 3-dehydroquinate dehydratase activity" evidence="2">
    <location>
        <position position="133"/>
    </location>
</feature>
<feature type="active site" description="Proton acceptor; for shikimate dehydrogenase activity" evidence="1">
    <location>
        <position position="277"/>
    </location>
</feature>
<feature type="binding site" evidence="2">
    <location>
        <position position="21"/>
    </location>
    <ligand>
        <name>3-dehydroquinate</name>
        <dbReference type="ChEBI" id="CHEBI:32364"/>
    </ligand>
</feature>
<feature type="binding site" evidence="2">
    <location>
        <begin position="29"/>
        <end position="31"/>
    </location>
    <ligand>
        <name>3-dehydroquinate</name>
        <dbReference type="ChEBI" id="CHEBI:32364"/>
    </ligand>
</feature>
<feature type="binding site" evidence="2">
    <location>
        <begin position="55"/>
        <end position="57"/>
    </location>
    <ligand>
        <name>3-dehydroquinate</name>
        <dbReference type="ChEBI" id="CHEBI:32364"/>
    </ligand>
</feature>
<feature type="binding site" evidence="2">
    <location>
        <position position="171"/>
    </location>
    <ligand>
        <name>3-dehydroquinate</name>
        <dbReference type="ChEBI" id="CHEBI:32364"/>
    </ligand>
</feature>
<feature type="binding site" evidence="2">
    <location>
        <position position="196"/>
    </location>
    <ligand>
        <name>3-dehydroquinate</name>
        <dbReference type="ChEBI" id="CHEBI:32364"/>
    </ligand>
</feature>
<feature type="binding site" evidence="1">
    <location>
        <begin position="226"/>
        <end position="228"/>
    </location>
    <ligand>
        <name>shikimate</name>
        <dbReference type="ChEBI" id="CHEBI:36208"/>
    </ligand>
</feature>
<feature type="binding site" evidence="1">
    <location>
        <position position="298"/>
    </location>
    <ligand>
        <name>shikimate</name>
        <dbReference type="ChEBI" id="CHEBI:36208"/>
    </ligand>
</feature>
<feature type="binding site" evidence="1">
    <location>
        <position position="313"/>
    </location>
    <ligand>
        <name>shikimate</name>
        <dbReference type="ChEBI" id="CHEBI:36208"/>
    </ligand>
</feature>
<feature type="binding site" evidence="1">
    <location>
        <begin position="337"/>
        <end position="341"/>
    </location>
    <ligand>
        <name>NADP(+)</name>
        <dbReference type="ChEBI" id="CHEBI:58349"/>
    </ligand>
</feature>
<feature type="binding site" evidence="1">
    <location>
        <begin position="360"/>
        <end position="362"/>
    </location>
    <ligand>
        <name>NADP(+)</name>
        <dbReference type="ChEBI" id="CHEBI:58349"/>
    </ligand>
</feature>
<feature type="binding site" evidence="1">
    <location>
        <position position="435"/>
    </location>
    <ligand>
        <name>NADP(+)</name>
        <dbReference type="ChEBI" id="CHEBI:58349"/>
    </ligand>
</feature>
<feature type="binding site" evidence="1">
    <location>
        <position position="442"/>
    </location>
    <ligand>
        <name>shikimate</name>
        <dbReference type="ChEBI" id="CHEBI:36208"/>
    </ligand>
</feature>
<dbReference type="EC" id="4.2.1.10" evidence="2"/>
<dbReference type="EC" id="1.1.1.25" evidence="1"/>
<dbReference type="EMBL" id="AE001273">
    <property type="protein sequence ID" value="AAC67966.1"/>
    <property type="molecule type" value="Genomic_DNA"/>
</dbReference>
<dbReference type="PIR" id="C71523">
    <property type="entry name" value="C71523"/>
</dbReference>
<dbReference type="RefSeq" id="NP_219879.1">
    <property type="nucleotide sequence ID" value="NC_000117.1"/>
</dbReference>
<dbReference type="RefSeq" id="WP_009871723.1">
    <property type="nucleotide sequence ID" value="NC_000117.1"/>
</dbReference>
<dbReference type="SMR" id="O84375"/>
<dbReference type="STRING" id="272561.CT_370"/>
<dbReference type="EnsemblBacteria" id="AAC67966">
    <property type="protein sequence ID" value="AAC67966"/>
    <property type="gene ID" value="CT_370"/>
</dbReference>
<dbReference type="GeneID" id="884748"/>
<dbReference type="KEGG" id="ctr:CT_370"/>
<dbReference type="PATRIC" id="fig|272561.5.peg.399"/>
<dbReference type="HOGENOM" id="CLU_019120_1_1_0"/>
<dbReference type="InParanoid" id="O84375"/>
<dbReference type="OrthoDB" id="9792692at2"/>
<dbReference type="UniPathway" id="UPA00053">
    <property type="reaction ID" value="UER00086"/>
</dbReference>
<dbReference type="UniPathway" id="UPA00053">
    <property type="reaction ID" value="UER00087"/>
</dbReference>
<dbReference type="Proteomes" id="UP000000431">
    <property type="component" value="Chromosome"/>
</dbReference>
<dbReference type="GO" id="GO:0003855">
    <property type="term" value="F:3-dehydroquinate dehydratase activity"/>
    <property type="evidence" value="ECO:0000250"/>
    <property type="project" value="UniProtKB"/>
</dbReference>
<dbReference type="GO" id="GO:0050661">
    <property type="term" value="F:NADP binding"/>
    <property type="evidence" value="ECO:0000250"/>
    <property type="project" value="UniProtKB"/>
</dbReference>
<dbReference type="GO" id="GO:0004764">
    <property type="term" value="F:shikimate 3-dehydrogenase (NADP+) activity"/>
    <property type="evidence" value="ECO:0000250"/>
    <property type="project" value="UniProtKB"/>
</dbReference>
<dbReference type="GO" id="GO:0046279">
    <property type="term" value="P:3,4-dihydroxybenzoate biosynthetic process"/>
    <property type="evidence" value="ECO:0000318"/>
    <property type="project" value="GO_Central"/>
</dbReference>
<dbReference type="GO" id="GO:0008652">
    <property type="term" value="P:amino acid biosynthetic process"/>
    <property type="evidence" value="ECO:0007669"/>
    <property type="project" value="UniProtKB-KW"/>
</dbReference>
<dbReference type="GO" id="GO:0009073">
    <property type="term" value="P:aromatic amino acid family biosynthetic process"/>
    <property type="evidence" value="ECO:0007669"/>
    <property type="project" value="UniProtKB-KW"/>
</dbReference>
<dbReference type="GO" id="GO:0009423">
    <property type="term" value="P:chorismate biosynthetic process"/>
    <property type="evidence" value="ECO:0000250"/>
    <property type="project" value="UniProtKB"/>
</dbReference>
<dbReference type="GO" id="GO:0019632">
    <property type="term" value="P:shikimate metabolic process"/>
    <property type="evidence" value="ECO:0000250"/>
    <property type="project" value="UniProtKB"/>
</dbReference>
<dbReference type="CDD" id="cd00502">
    <property type="entry name" value="DHQase_I"/>
    <property type="match status" value="1"/>
</dbReference>
<dbReference type="CDD" id="cd01065">
    <property type="entry name" value="NAD_bind_Shikimate_DH"/>
    <property type="match status" value="1"/>
</dbReference>
<dbReference type="FunFam" id="3.20.20.70:FF:000391">
    <property type="entry name" value="Shikimate biosynthesis protein AroDE"/>
    <property type="match status" value="1"/>
</dbReference>
<dbReference type="FunFam" id="3.40.50.720:FF:001164">
    <property type="entry name" value="Shikimate biosynthesis protein AroDE"/>
    <property type="match status" value="1"/>
</dbReference>
<dbReference type="Gene3D" id="3.20.20.70">
    <property type="entry name" value="Aldolase class I"/>
    <property type="match status" value="1"/>
</dbReference>
<dbReference type="Gene3D" id="3.40.50.10860">
    <property type="entry name" value="Leucine Dehydrogenase, chain A, domain 1"/>
    <property type="match status" value="1"/>
</dbReference>
<dbReference type="Gene3D" id="3.40.50.720">
    <property type="entry name" value="NAD(P)-binding Rossmann-like Domain"/>
    <property type="match status" value="1"/>
</dbReference>
<dbReference type="HAMAP" id="MF_00214">
    <property type="entry name" value="AroD"/>
    <property type="match status" value="1"/>
</dbReference>
<dbReference type="InterPro" id="IPR013785">
    <property type="entry name" value="Aldolase_TIM"/>
</dbReference>
<dbReference type="InterPro" id="IPR046346">
    <property type="entry name" value="Aminoacid_DH-like_N_sf"/>
</dbReference>
<dbReference type="InterPro" id="IPR001381">
    <property type="entry name" value="DHquinase_I"/>
</dbReference>
<dbReference type="InterPro" id="IPR036291">
    <property type="entry name" value="NAD(P)-bd_dom_sf"/>
</dbReference>
<dbReference type="InterPro" id="IPR011342">
    <property type="entry name" value="Shikimate_DH"/>
</dbReference>
<dbReference type="InterPro" id="IPR013708">
    <property type="entry name" value="Shikimate_DH-bd_N"/>
</dbReference>
<dbReference type="InterPro" id="IPR006151">
    <property type="entry name" value="Shikm_DH/Glu-tRNA_Rdtase"/>
</dbReference>
<dbReference type="InterPro" id="IPR050146">
    <property type="entry name" value="Type-I_3-dehydroquinase"/>
</dbReference>
<dbReference type="NCBIfam" id="TIGR00507">
    <property type="entry name" value="aroE"/>
    <property type="match status" value="1"/>
</dbReference>
<dbReference type="NCBIfam" id="NF006802">
    <property type="entry name" value="PRK09310.1"/>
    <property type="match status" value="1"/>
</dbReference>
<dbReference type="PANTHER" id="PTHR43699">
    <property type="entry name" value="3-DEHYDROQUINATE DEHYDRATASE"/>
    <property type="match status" value="1"/>
</dbReference>
<dbReference type="PANTHER" id="PTHR43699:SF1">
    <property type="entry name" value="3-DEHYDROQUINATE DEHYDRATASE"/>
    <property type="match status" value="1"/>
</dbReference>
<dbReference type="Pfam" id="PF01487">
    <property type="entry name" value="DHquinase_I"/>
    <property type="match status" value="1"/>
</dbReference>
<dbReference type="Pfam" id="PF01488">
    <property type="entry name" value="Shikimate_DH"/>
    <property type="match status" value="1"/>
</dbReference>
<dbReference type="Pfam" id="PF08501">
    <property type="entry name" value="Shikimate_dh_N"/>
    <property type="match status" value="1"/>
</dbReference>
<dbReference type="SUPFAM" id="SSF51569">
    <property type="entry name" value="Aldolase"/>
    <property type="match status" value="1"/>
</dbReference>
<dbReference type="SUPFAM" id="SSF53223">
    <property type="entry name" value="Aminoacid dehydrogenase-like, N-terminal domain"/>
    <property type="match status" value="1"/>
</dbReference>
<dbReference type="SUPFAM" id="SSF51735">
    <property type="entry name" value="NAD(P)-binding Rossmann-fold domains"/>
    <property type="match status" value="1"/>
</dbReference>
<protein>
    <recommendedName>
        <fullName evidence="3">Shikimate biosynthesis protein AroDE</fullName>
    </recommendedName>
    <domain>
        <recommendedName>
            <fullName evidence="2">3-dehydroquinate dehydratase</fullName>
            <shortName evidence="2">3-dehydroquinase</shortName>
            <ecNumber evidence="2">4.2.1.10</ecNumber>
        </recommendedName>
        <alternativeName>
            <fullName evidence="2">Type I DHQase</fullName>
        </alternativeName>
        <alternativeName>
            <fullName evidence="2">Type I dehydroquinase</fullName>
            <shortName evidence="2">DHQ1</shortName>
        </alternativeName>
    </domain>
    <domain>
        <recommendedName>
            <fullName evidence="1">Shikimate dehydrogenase (NADP(+))</fullName>
            <shortName evidence="1">SDH</shortName>
            <ecNumber evidence="1">1.1.1.25</ecNumber>
        </recommendedName>
    </domain>
</protein>
<name>ARODE_CHLTR</name>